<comment type="function">
    <text evidence="1 6 8">Cysteine proteinase with a strong preference for substrates with Lys in the P1 position. Hydrolyzes bovine hemoglobin, bovine serum albumin, casein, human placental type I collagen and human IgA and IgG (PubMed:9245829). Disrupts the functions of polymorphonuclear leukocytes. May act as a virulence factor in the development of peridontal disease. Involved in the coaggregation of P.gingivalis with other oral bacteria (By similarity). Has hemolytic activity; this is mediated by the adhesin domains and does not require the catalytic domain (PubMed:21812842, PubMed:24265933).</text>
</comment>
<comment type="catalytic activity">
    <reaction evidence="8">
        <text>Endopeptidase with strict specificity for lysyl bonds.</text>
        <dbReference type="EC" id="3.4.22.47"/>
    </reaction>
</comment>
<comment type="subcellular location">
    <molecule>Lys-gingipain catalytic subunit</molecule>
    <subcellularLocation>
        <location evidence="8">Secreted</location>
    </subcellularLocation>
</comment>
<comment type="subcellular location">
    <molecule>39 kDa adhesin</molecule>
    <subcellularLocation>
        <location evidence="8">Secreted</location>
    </subcellularLocation>
</comment>
<comment type="subcellular location">
    <molecule>15 kDa adhesin</molecule>
    <subcellularLocation>
        <location evidence="8">Secreted</location>
    </subcellularLocation>
</comment>
<comment type="subcellular location">
    <molecule>44 kDa adhesin</molecule>
    <subcellularLocation>
        <location evidence="8">Secreted</location>
    </subcellularLocation>
</comment>
<comment type="domain">
    <text evidence="5 6">The isolated adhesin domains have hemolytic activity (in vitro).</text>
</comment>
<comment type="PTM">
    <text evidence="8">Proteolytically cleaved into a catalytic subunit and three adhesins. Arg-gingipain is involved in this post-translational processing.</text>
</comment>
<comment type="polymorphism">
    <text evidence="4">Several forms of kgp with differences at the C-terminus exist in different P.gingivalis strains.</text>
</comment>
<comment type="similarity">
    <text evidence="2">Belongs to the peptidase C25 family.</text>
</comment>
<sequence length="1732" mass="187875">MRKLLLLIAASLLGVGLYAQSAKIKLDAPTTRTTCTNNSFKQFDASFSFNEVELTKVETKGGTFASVSIPGAFPTGEVGSPEVPAVRKLIAVPVGATPVVRVKSFTEQVYSLNQYGSEKLMPHQPSMSKSDDPEKVPFVYNAAAYARKGFVGQELTQVEMLGTMRGVRIAALTINPVQYDVVANQLKVRNNIEIEVSFQGADEVATQRLYDASFSPYFETAYKQLFNRDVYTDHGDLYNTPVRMLVVAGAKFKEALKPWLTWKAQKGFYLDVHYTDEAEVGTTNASIKAFIHKKYNDGLAASAAPVFLALVGDTDVISGEKGKKTKKVTDLYYSAVDGDYFPEMYTFRMSASSPEELTNIIDKVLMYEKATMPDKSYLEKVLLIAGADYSWNSQVGQPTIKYGMQYYYNQEHGYTDVYNYLKAPYTGCYSHLNTGVSFANYTAHGSETAWADPLLTTSQLKALTNKDKYFLAIGNCCITAQFDYVQPCFGEVITRVKEKGAYAYIGSSPNSYWGEDYYWSVGANAVFGVQPTFEGTSMGSYDATFLEDSYNTVNSIMWAGNLAATHAGNIGNITHIGAHYYWEAYHVLGDGSVMPYRAMPKTNTYTLPASLPQNQASYSIQASAGSYVAISKDGVLYGTGVANASGVATVSMTKQITENGNYDVVITRSNYLPVIKQIQVGEPSPYQPVSNLTATTQGQKVTLKWEAPSAKKAEGSREVKRIGDGLFVTIEPANDVRANEAKVVLAADNVWGDNTGYQFLLDADHNTFGSVIPATGPLFTGTASSNLYSANFEYLVPANADPVVTTQNIIVTGQGEVVIPGGVYDYCITNPEPASGKMWIAGDGGNQPARYDDFTFEAGKKYTFTMRRAGMGDGTDMEVEDDSPASYTYTVYRDGTKIKEGLTATTFEEDGVAAGNHEYCVEVKYTAGVSPKVCKDVTVEGSNEFAPVQNLTGSSVGQKVTLKWDAPNGTPNPNPNPNPNPGTTLSESFENGIPASWKTIDADGDGHGWKPGNAPGIAGYNSNGCVYSESFGLGGIGVLTPDNYLITPALDLPNGGKLTFWVCAQDANYASEHYAVYASSTGNDASNFTNALLEETITAKGVRSPKAIRGRIQGTWRQKTVDLPAGTKYVAFRHFQSTDMFYIDLDEVEIKANGKRADFTETFESSTHGEAPAEWTTIDADGDGQGWLCLSSGQLDWLTAHGGSNVVSSFSWNGMALNPDNYLISKDVTGATKVKYYYAVNDGFPGDHYAVMISKTGTNAGDFTVVFEETPNGINKGGARFGLSTEANGAKPQSVWIERTVDLPAGTKYVAFRHYNCSDLNYILLDDIQFTMGGSPTPTDYTYTVYRDGTKIKEGLTETTFEEDGVATGNHEYCVEVKYTAGVSPKKCVDVTVNSTQFNPVQNLTAEQAPNSMDAILKWNAPASKRAEVLNEDFENGIPASWKTIDADGDGNNWTTTPPPGGSSFAGHNSAICVSSASHINFEGPQNPDNYLVTPELSLPGGGTLTFWVCAQDANYASEHYAVYASSTGNDASNFANALLEEVLTAKTVVTAPEAIRGTRAQGTWYQKTVQLPAGTKYVAFRHFGCTDFFWINLDDVVITSGNAPSYTYTIYRNNTQIASGVTETTYRDPDLATGFYTYGVKVVYPNGESAIETATLNITSLADVTAQKPYTLTVVGKTITVTCQGEAMIYDMNGRRLAAGRNTVVYTAQGGHYAVMVVVDGKSYVEKLAVK</sequence>
<name>KGP83_PORGN</name>
<evidence type="ECO:0000250" key="1">
    <source>
        <dbReference type="UniProtKB" id="B2RLK2"/>
    </source>
</evidence>
<evidence type="ECO:0000255" key="2"/>
<evidence type="ECO:0000256" key="3">
    <source>
        <dbReference type="SAM" id="MobiDB-lite"/>
    </source>
</evidence>
<evidence type="ECO:0000269" key="4">
    <source>
    </source>
</evidence>
<evidence type="ECO:0000269" key="5">
    <source>
    </source>
</evidence>
<evidence type="ECO:0000269" key="6">
    <source>
    </source>
</evidence>
<evidence type="ECO:0000269" key="7">
    <source>
    </source>
</evidence>
<evidence type="ECO:0000269" key="8">
    <source>
    </source>
</evidence>
<evidence type="ECO:0000303" key="9">
    <source>
    </source>
</evidence>
<evidence type="ECO:0000303" key="10">
    <source>
    </source>
</evidence>
<evidence type="ECO:0000303" key="11">
    <source>
    </source>
</evidence>
<evidence type="ECO:0000303" key="12">
    <source>
    </source>
</evidence>
<evidence type="ECO:0000303" key="13">
    <source>
    </source>
</evidence>
<evidence type="ECO:0000303" key="14">
    <source>
    </source>
</evidence>
<evidence type="ECO:0000303" key="15">
    <source>
    </source>
</evidence>
<evidence type="ECO:0000303" key="16">
    <source>
    </source>
</evidence>
<evidence type="ECO:0000303" key="17">
    <source>
    </source>
</evidence>
<evidence type="ECO:0000305" key="18"/>
<evidence type="ECO:0000305" key="19">
    <source>
    </source>
</evidence>
<evidence type="ECO:0000305" key="20">
    <source>
    </source>
</evidence>
<evidence type="ECO:0000305" key="21">
    <source>
    </source>
</evidence>
<evidence type="ECO:0000305" key="22">
    <source>
    </source>
</evidence>
<evidence type="ECO:0000312" key="23">
    <source>
        <dbReference type="EMBL" id="AAB06565.1"/>
    </source>
</evidence>
<evidence type="ECO:0000312" key="24">
    <source>
        <dbReference type="EMBL" id="AAB60809.1"/>
    </source>
</evidence>
<evidence type="ECO:0000312" key="25">
    <source>
        <dbReference type="EMBL" id="AAC26523.1"/>
    </source>
</evidence>
<evidence type="ECO:0007744" key="26">
    <source>
        <dbReference type="PDB" id="3M1H"/>
    </source>
</evidence>
<evidence type="ECO:0007744" key="27">
    <source>
        <dbReference type="PDB" id="4ITC"/>
    </source>
</evidence>
<evidence type="ECO:0007744" key="28">
    <source>
        <dbReference type="PDB" id="4RBM"/>
    </source>
</evidence>
<evidence type="ECO:0007829" key="29">
    <source>
        <dbReference type="PDB" id="3M1H"/>
    </source>
</evidence>
<evidence type="ECO:0007829" key="30">
    <source>
        <dbReference type="PDB" id="4ITC"/>
    </source>
</evidence>
<evidence type="ECO:0007829" key="31">
    <source>
        <dbReference type="PDB" id="4TKX"/>
    </source>
</evidence>
<evidence type="ECO:0007829" key="32">
    <source>
        <dbReference type="PDB" id="5MUN"/>
    </source>
</evidence>
<evidence type="ECO:0007829" key="33">
    <source>
        <dbReference type="PDB" id="6I9A"/>
    </source>
</evidence>
<reference evidence="18 23" key="1">
    <citation type="journal article" date="1996" name="J. Bacteriol.">
        <title>Analysis of the prtP gene encoding porphypain, a cysteine proteinase of Porphyromonas gingivalis.</title>
        <authorList>
            <person name="Barkocy-Gallagher G.A."/>
            <person name="Han N."/>
            <person name="Patti J.M."/>
            <person name="Whitlock J."/>
            <person name="Progulske-Fox A."/>
            <person name="Lantz M.S."/>
        </authorList>
    </citation>
    <scope>NUCLEOTIDE SEQUENCE [GENOMIC DNA]</scope>
    <source>
        <strain evidence="23">W12</strain>
    </source>
</reference>
<reference evidence="25" key="2">
    <citation type="journal article" date="1998" name="Infect. Immun.">
        <title>IS195, an insertion sequence-like element associated with protease genes in Porphyromonas gingivalis.</title>
        <authorList>
            <person name="Lewis J.P."/>
            <person name="Macrina F.L."/>
        </authorList>
    </citation>
    <scope>NUCLEOTIDE SEQUENCE [GENOMIC DNA]</scope>
    <source>
        <strain evidence="25">ATCC BAA-308 / W83</strain>
    </source>
</reference>
<reference evidence="18 24" key="3">
    <citation type="journal article" date="1999" name="Oral Microbiol. Immunol.">
        <title>Characterization of a Porphyromonas gingivalis gene prtK that encodes a lysine-specific cysteine proteinase and three sequence-related adhesins.</title>
        <authorList>
            <person name="Slakeski N."/>
            <person name="Cleal S.M."/>
            <person name="Bhogal P.S."/>
            <person name="Reynolds E.C."/>
        </authorList>
    </citation>
    <scope>NUCLEOTIDE SEQUENCE [GENOMIC DNA]</scope>
    <source>
        <strain evidence="24">ATCC 53978 / W50</strain>
    </source>
</reference>
<reference evidence="18" key="4">
    <citation type="journal article" date="1997" name="Microbiology">
        <title>A cell-associated protein complex of Porphyromonas gingivalis W50 composed of Arg- and Lys-specific cysteine proteinases and adhesins.</title>
        <authorList>
            <person name="Bhogal P.S."/>
            <person name="Slakeski N."/>
            <person name="Reynolds E.C."/>
        </authorList>
    </citation>
    <scope>PROTEIN SEQUENCE OF 229-245; 738-763; 1157-1180 AND 1292-1313</scope>
    <scope>FUNCTION</scope>
    <scope>CATALYTIC ACTIVITY</scope>
    <scope>SUBCELLULAR LOCATION</scope>
    <source>
        <strain evidence="8">ATCC 53978 / W50</strain>
    </source>
</reference>
<reference evidence="18" key="5">
    <citation type="journal article" date="2004" name="J. Clin. Microbiol.">
        <title>Distribution of Porphyromonas gingivalis biotypes defined by alleles of the kgp (Lys-gingipain) gene.</title>
        <authorList>
            <person name="Nadkarni M.A."/>
            <person name="Nguyen K.A."/>
            <person name="Chapple C.C."/>
            <person name="DeCarlo A.A."/>
            <person name="Jacques N.A."/>
            <person name="Hunter N."/>
        </authorList>
    </citation>
    <scope>POLYMORPHISM</scope>
</reference>
<reference key="6">
    <citation type="journal article" date="2011" name="Mol. Microbiol.">
        <title>The modular structure of haemagglutinin/adhesin regions in gingipains of Porphyromonas gingivalis.</title>
        <authorList>
            <person name="Li N."/>
            <person name="Yun P."/>
            <person name="Jeffries C.M."/>
            <person name="Langley D."/>
            <person name="Gamsjaeger R."/>
            <person name="Church W.B."/>
            <person name="Hunter N."/>
            <person name="Collyer C.A."/>
        </authorList>
    </citation>
    <scope>X-RAY CRYSTALLOGRAPHY (1.56 ANGSTROMS) OF 1427-1602 IN COMPLEX WITH CALCIUM</scope>
    <scope>DOMAIN</scope>
    <scope>FUNCTION</scope>
    <source>
        <strain evidence="11">ATCC BAA-308 / W83</strain>
    </source>
</reference>
<reference key="7">
    <citation type="journal article" date="2013" name="Eur. J. Microbiol. Immunol.">
        <title>The lysine gingipain adhesin domains from Porphyromonas gingivalis interact with erythrocytes and albumin: Structures correlate to function.</title>
        <authorList>
            <person name="Ganuelas L.A."/>
            <person name="Li N."/>
            <person name="Yun P."/>
            <person name="Hunter N."/>
            <person name="Collyer C.A."/>
        </authorList>
    </citation>
    <scope>X-RAY CRYSTALLOGRAPHY (1.55 ANGSTROMS) OF 982-1154 IN COMPLEX WITH CALCIUM</scope>
    <scope>FUNCTION</scope>
    <source>
        <strain evidence="12">ATCC BAA-308 / W83</strain>
    </source>
</reference>
<reference key="8">
    <citation type="journal article" date="2014" name="J. Biol. Chem.">
        <title>Structure and mechanism of cysteine peptidase gingipain K (Kgp), a major virulence factor of Porphyromonas gingivalis in periodontitis.</title>
        <authorList>
            <person name="de Diego I."/>
            <person name="Veillard F."/>
            <person name="Sztukowska M.N."/>
            <person name="Guevara T."/>
            <person name="Potempa B."/>
            <person name="Pomowski A."/>
            <person name="Huntington J.A."/>
            <person name="Potempa J."/>
            <person name="Gomis-Ruth F.X."/>
        </authorList>
    </citation>
    <scope>X-RAY CRYSTALLOGRAPHY (1.75 ANGSTROMS) OF 229-683 IN COMPLEX WITH CALCIUM</scope>
    <scope>ACTIVE SITE</scope>
    <source>
        <strain evidence="13">ATCC BAA-308 / W83</strain>
    </source>
</reference>
<reference key="9">
    <citation type="journal article" date="2015" name="Protein Sci.">
        <title>Structure of the lysine specific protease Kgp from Porphyromonas gingivalis, a target for improved oral health.</title>
        <authorList>
            <person name="Gorman M.A."/>
            <person name="Seers C.A."/>
            <person name="Michell B.J."/>
            <person name="Feil S.C."/>
            <person name="Huq N.L."/>
            <person name="Cross K.J."/>
            <person name="Reynolds E.C."/>
            <person name="Parker M.W."/>
        </authorList>
    </citation>
    <scope>X-RAY CRYSTALLOGRAPHY (1.60 ANGSTROMS) OF 229-680</scope>
    <source>
        <strain evidence="14">ATCC 53978 / W50</strain>
    </source>
</reference>
<dbReference type="EC" id="3.4.22.47" evidence="8"/>
<dbReference type="EMBL" id="U42210">
    <property type="protein sequence ID" value="AAB06565.1"/>
    <property type="molecule type" value="Genomic_DNA"/>
</dbReference>
<dbReference type="EMBL" id="AF017059">
    <property type="protein sequence ID" value="AAC26523.1"/>
    <property type="molecule type" value="Genomic_DNA"/>
</dbReference>
<dbReference type="EMBL" id="U75366">
    <property type="protein sequence ID" value="AAB60809.1"/>
    <property type="molecule type" value="Genomic_DNA"/>
</dbReference>
<dbReference type="PIR" id="T30836">
    <property type="entry name" value="T30836"/>
</dbReference>
<dbReference type="PDB" id="3M1H">
    <property type="method" value="X-ray"/>
    <property type="resolution" value="1.56 A"/>
    <property type="chains" value="A/B/C/D=1427-1602"/>
</dbReference>
<dbReference type="PDB" id="4ITC">
    <property type="method" value="X-ray"/>
    <property type="resolution" value="1.55 A"/>
    <property type="chains" value="A=982-1154"/>
</dbReference>
<dbReference type="PDB" id="4RBM">
    <property type="method" value="X-ray"/>
    <property type="resolution" value="1.75 A"/>
    <property type="chains" value="A=229-683"/>
</dbReference>
<dbReference type="PDB" id="4TKX">
    <property type="method" value="X-ray"/>
    <property type="resolution" value="1.60 A"/>
    <property type="chains" value="L=229-680"/>
</dbReference>
<dbReference type="PDB" id="5MUN">
    <property type="method" value="X-ray"/>
    <property type="resolution" value="1.80 A"/>
    <property type="chains" value="A/B=20-228"/>
</dbReference>
<dbReference type="PDB" id="6I9A">
    <property type="method" value="X-ray"/>
    <property type="resolution" value="1.20 A"/>
    <property type="chains" value="A/B=229-683"/>
</dbReference>
<dbReference type="PDBsum" id="3M1H"/>
<dbReference type="PDBsum" id="4ITC"/>
<dbReference type="PDBsum" id="4RBM"/>
<dbReference type="PDBsum" id="4TKX"/>
<dbReference type="PDBsum" id="5MUN"/>
<dbReference type="PDBsum" id="6I9A"/>
<dbReference type="SASBDB" id="Q51817"/>
<dbReference type="SMR" id="Q51817"/>
<dbReference type="BindingDB" id="Q51817"/>
<dbReference type="MEROPS" id="C25.002"/>
<dbReference type="BRENDA" id="3.4.22.47">
    <property type="organism ID" value="756"/>
</dbReference>
<dbReference type="EvolutionaryTrace" id="Q51817"/>
<dbReference type="GO" id="GO:0005576">
    <property type="term" value="C:extracellular region"/>
    <property type="evidence" value="ECO:0000314"/>
    <property type="project" value="UniProtKB"/>
</dbReference>
<dbReference type="GO" id="GO:0005509">
    <property type="term" value="F:calcium ion binding"/>
    <property type="evidence" value="ECO:0000314"/>
    <property type="project" value="UniProtKB"/>
</dbReference>
<dbReference type="GO" id="GO:0004197">
    <property type="term" value="F:cysteine-type endopeptidase activity"/>
    <property type="evidence" value="ECO:0000314"/>
    <property type="project" value="UniProtKB"/>
</dbReference>
<dbReference type="GO" id="GO:0044179">
    <property type="term" value="P:hemolysis in another organism"/>
    <property type="evidence" value="ECO:0000315"/>
    <property type="project" value="UniProtKB"/>
</dbReference>
<dbReference type="GO" id="GO:0006508">
    <property type="term" value="P:proteolysis"/>
    <property type="evidence" value="ECO:0000314"/>
    <property type="project" value="UniProtKB"/>
</dbReference>
<dbReference type="CDD" id="cd10913">
    <property type="entry name" value="Peptidase_C25_N_gingipain"/>
    <property type="match status" value="1"/>
</dbReference>
<dbReference type="FunFam" id="2.60.120.200:FF:000195">
    <property type="entry name" value="Lys-gingipain W83"/>
    <property type="match status" value="1"/>
</dbReference>
<dbReference type="FunFam" id="2.60.40.3800:FF:000002">
    <property type="entry name" value="Lys-gingipain W83"/>
    <property type="match status" value="1"/>
</dbReference>
<dbReference type="FunFam" id="3.40.50.1460:FF:000023">
    <property type="entry name" value="Lys-gingipain W83"/>
    <property type="match status" value="1"/>
</dbReference>
<dbReference type="Gene3D" id="2.60.120.200">
    <property type="match status" value="3"/>
</dbReference>
<dbReference type="Gene3D" id="2.60.40.3800">
    <property type="match status" value="1"/>
</dbReference>
<dbReference type="Gene3D" id="3.40.50.1460">
    <property type="match status" value="1"/>
</dbReference>
<dbReference type="Gene3D" id="3.40.50.10390">
    <property type="entry name" value="Gingipain r, domain 1"/>
    <property type="match status" value="1"/>
</dbReference>
<dbReference type="Gene3D" id="2.60.40.10">
    <property type="entry name" value="Immunoglobulins"/>
    <property type="match status" value="4"/>
</dbReference>
<dbReference type="InterPro" id="IPR029030">
    <property type="entry name" value="Caspase-like_dom_sf"/>
</dbReference>
<dbReference type="InterPro" id="IPR011628">
    <property type="entry name" value="Cleaved_adhesin"/>
</dbReference>
<dbReference type="InterPro" id="IPR001769">
    <property type="entry name" value="Gingipain"/>
</dbReference>
<dbReference type="InterPro" id="IPR039392">
    <property type="entry name" value="Gingipain_N"/>
</dbReference>
<dbReference type="InterPro" id="IPR029031">
    <property type="entry name" value="Gingipain_N_sf"/>
</dbReference>
<dbReference type="InterPro" id="IPR038490">
    <property type="entry name" value="Gingipain_propep_sf"/>
</dbReference>
<dbReference type="InterPro" id="IPR013783">
    <property type="entry name" value="Ig-like_fold"/>
</dbReference>
<dbReference type="InterPro" id="IPR018832">
    <property type="entry name" value="Pept_C25_gingipain_C"/>
</dbReference>
<dbReference type="InterPro" id="IPR005536">
    <property type="entry name" value="Peptidase_C25_Ig-like_domain"/>
</dbReference>
<dbReference type="InterPro" id="IPR012600">
    <property type="entry name" value="Propeptide_C25"/>
</dbReference>
<dbReference type="NCBIfam" id="NF038128">
    <property type="entry name" value="choice_anch_J"/>
    <property type="match status" value="3"/>
</dbReference>
<dbReference type="Pfam" id="PF07675">
    <property type="entry name" value="Cleaved_Adhesin"/>
    <property type="match status" value="3"/>
</dbReference>
<dbReference type="Pfam" id="PF10365">
    <property type="entry name" value="DUF2436"/>
    <property type="match status" value="1"/>
</dbReference>
<dbReference type="Pfam" id="PF01364">
    <property type="entry name" value="Peptidase_C25"/>
    <property type="match status" value="1"/>
</dbReference>
<dbReference type="Pfam" id="PF03785">
    <property type="entry name" value="Peptidase_C25_C"/>
    <property type="match status" value="1"/>
</dbReference>
<dbReference type="Pfam" id="PF08126">
    <property type="entry name" value="Propeptide_C25"/>
    <property type="match status" value="1"/>
</dbReference>
<dbReference type="SUPFAM" id="SSF52129">
    <property type="entry name" value="Caspase-like"/>
    <property type="match status" value="1"/>
</dbReference>
<feature type="signal peptide" evidence="2">
    <location>
        <begin position="1"/>
        <end position="24"/>
    </location>
</feature>
<feature type="propeptide" id="PRO_0000395381" evidence="8">
    <location>
        <begin position="25"/>
        <end position="228"/>
    </location>
</feature>
<feature type="chain" id="PRO_0000395382" description="Lys-gingipain W83" evidence="22">
    <location>
        <begin position="229"/>
        <end position="1732"/>
    </location>
</feature>
<feature type="chain" id="PRO_0000395383" description="Lys-gingipain catalytic subunit" evidence="21 22">
    <location>
        <begin position="229"/>
        <end position="680"/>
    </location>
</feature>
<feature type="chain" id="PRO_0000395384" description="39 kDa adhesin" evidence="22">
    <location>
        <begin position="738"/>
        <end status="unknown"/>
    </location>
</feature>
<feature type="chain" id="PRO_0000395385" description="15 kDa adhesin" evidence="22">
    <location>
        <begin position="1157"/>
        <end status="unknown"/>
    </location>
</feature>
<feature type="chain" id="PRO_0000395386" description="44 kDa adhesin" evidence="19 22">
    <location>
        <begin position="1292"/>
        <end status="unknown"/>
    </location>
</feature>
<feature type="region of interest" description="Disordered" evidence="3">
    <location>
        <begin position="965"/>
        <end position="988"/>
    </location>
</feature>
<feature type="compositionally biased region" description="Pro residues" evidence="3">
    <location>
        <begin position="970"/>
        <end position="980"/>
    </location>
</feature>
<feature type="active site" description="Proton donor" evidence="20">
    <location>
        <position position="444"/>
    </location>
</feature>
<feature type="active site" description="Nucleophile" evidence="7">
    <location>
        <position position="477"/>
    </location>
</feature>
<feature type="binding site" evidence="7 28">
    <location>
        <position position="313"/>
    </location>
    <ligand>
        <name>Ca(2+)</name>
        <dbReference type="ChEBI" id="CHEBI:29108"/>
        <label>1</label>
    </ligand>
</feature>
<feature type="binding site" evidence="7 28">
    <location>
        <position position="337"/>
    </location>
    <ligand>
        <name>Ca(2+)</name>
        <dbReference type="ChEBI" id="CHEBI:29108"/>
        <label>2</label>
    </ligand>
</feature>
<feature type="binding site" evidence="7 28">
    <location>
        <position position="339"/>
    </location>
    <ligand>
        <name>Ca(2+)</name>
        <dbReference type="ChEBI" id="CHEBI:29108"/>
        <label>2</label>
    </ligand>
</feature>
<feature type="binding site" evidence="7 28">
    <location>
        <position position="341"/>
    </location>
    <ligand>
        <name>Ca(2+)</name>
        <dbReference type="ChEBI" id="CHEBI:29108"/>
        <label>2</label>
    </ligand>
</feature>
<feature type="binding site" evidence="7 28">
    <location>
        <position position="343"/>
    </location>
    <ligand>
        <name>Ca(2+)</name>
        <dbReference type="ChEBI" id="CHEBI:29108"/>
        <label>2</label>
    </ligand>
</feature>
<feature type="binding site" evidence="7 28">
    <location>
        <position position="482"/>
    </location>
    <ligand>
        <name>Ca(2+)</name>
        <dbReference type="ChEBI" id="CHEBI:29108"/>
        <label>1</label>
    </ligand>
</feature>
<feature type="binding site" evidence="7 28">
    <location>
        <position position="491"/>
    </location>
    <ligand>
        <name>Ca(2+)</name>
        <dbReference type="ChEBI" id="CHEBI:29108"/>
        <label>1</label>
    </ligand>
</feature>
<feature type="binding site" evidence="6 27">
    <location>
        <position position="988"/>
    </location>
    <ligand>
        <name>Ca(2+)</name>
        <dbReference type="ChEBI" id="CHEBI:29108"/>
        <label>3</label>
    </ligand>
</feature>
<feature type="binding site" evidence="6 27">
    <location>
        <position position="990"/>
    </location>
    <ligand>
        <name>Ca(2+)</name>
        <dbReference type="ChEBI" id="CHEBI:29108"/>
        <label>3</label>
    </ligand>
</feature>
<feature type="binding site" evidence="6 27">
    <location>
        <position position="1001"/>
    </location>
    <ligand>
        <name>Ca(2+)</name>
        <dbReference type="ChEBI" id="CHEBI:29108"/>
        <label>4</label>
    </ligand>
</feature>
<feature type="binding site" evidence="6 27">
    <location>
        <position position="1003"/>
    </location>
    <ligand>
        <name>Ca(2+)</name>
        <dbReference type="ChEBI" id="CHEBI:29108"/>
        <label>4</label>
    </ligand>
</feature>
<feature type="binding site" evidence="6 27">
    <location>
        <position position="1005"/>
    </location>
    <ligand>
        <name>Ca(2+)</name>
        <dbReference type="ChEBI" id="CHEBI:29108"/>
        <label>4</label>
    </ligand>
</feature>
<feature type="binding site" evidence="6 27">
    <location>
        <position position="1007"/>
    </location>
    <ligand>
        <name>Ca(2+)</name>
        <dbReference type="ChEBI" id="CHEBI:29108"/>
        <label>4</label>
    </ligand>
</feature>
<feature type="binding site" evidence="6 27">
    <location>
        <position position="1022"/>
    </location>
    <ligand>
        <name>Ca(2+)</name>
        <dbReference type="ChEBI" id="CHEBI:29108"/>
        <label>3</label>
    </ligand>
</feature>
<feature type="binding site" evidence="6 27">
    <location>
        <position position="1024"/>
    </location>
    <ligand>
        <name>Ca(2+)</name>
        <dbReference type="ChEBI" id="CHEBI:29108"/>
        <label>3</label>
    </ligand>
</feature>
<feature type="binding site" evidence="6 27">
    <location>
        <position position="1043"/>
    </location>
    <ligand>
        <name>Ca(2+)</name>
        <dbReference type="ChEBI" id="CHEBI:29108"/>
        <label>4</label>
    </ligand>
</feature>
<feature type="binding site" evidence="6 27">
    <location>
        <position position="1146"/>
    </location>
    <ligand>
        <name>Ca(2+)</name>
        <dbReference type="ChEBI" id="CHEBI:29108"/>
        <label>3</label>
    </ligand>
</feature>
<feature type="binding site" evidence="6 27">
    <location>
        <position position="1147"/>
    </location>
    <ligand>
        <name>Ca(2+)</name>
        <dbReference type="ChEBI" id="CHEBI:29108"/>
        <label>3</label>
    </ligand>
</feature>
<feature type="binding site" evidence="5 26">
    <location>
        <position position="1433"/>
    </location>
    <ligand>
        <name>Ca(2+)</name>
        <dbReference type="ChEBI" id="CHEBI:29108"/>
        <label>5</label>
    </ligand>
</feature>
<feature type="binding site" evidence="5 26">
    <location>
        <position position="1435"/>
    </location>
    <ligand>
        <name>Ca(2+)</name>
        <dbReference type="ChEBI" id="CHEBI:29108"/>
        <label>5</label>
    </ligand>
</feature>
<feature type="binding site" evidence="5 26">
    <location>
        <position position="1446"/>
    </location>
    <ligand>
        <name>Ca(2+)</name>
        <dbReference type="ChEBI" id="CHEBI:29108"/>
        <label>6</label>
    </ligand>
</feature>
<feature type="binding site" evidence="5 26">
    <location>
        <position position="1448"/>
    </location>
    <ligand>
        <name>Ca(2+)</name>
        <dbReference type="ChEBI" id="CHEBI:29108"/>
        <label>6</label>
    </ligand>
</feature>
<feature type="binding site" evidence="5 26">
    <location>
        <position position="1450"/>
    </location>
    <ligand>
        <name>Ca(2+)</name>
        <dbReference type="ChEBI" id="CHEBI:29108"/>
        <label>6</label>
    </ligand>
</feature>
<feature type="binding site" evidence="5 26">
    <location>
        <position position="1452"/>
    </location>
    <ligand>
        <name>Ca(2+)</name>
        <dbReference type="ChEBI" id="CHEBI:29108"/>
        <label>6</label>
    </ligand>
</feature>
<feature type="binding site" evidence="5 26">
    <location>
        <position position="1470"/>
    </location>
    <ligand>
        <name>Ca(2+)</name>
        <dbReference type="ChEBI" id="CHEBI:29108"/>
        <label>5</label>
    </ligand>
</feature>
<feature type="binding site" evidence="5 26">
    <location>
        <position position="1472"/>
    </location>
    <ligand>
        <name>Ca(2+)</name>
        <dbReference type="ChEBI" id="CHEBI:29108"/>
        <label>5</label>
    </ligand>
</feature>
<feature type="binding site" evidence="5 26">
    <location>
        <position position="1490"/>
    </location>
    <ligand>
        <name>Ca(2+)</name>
        <dbReference type="ChEBI" id="CHEBI:29108"/>
        <label>6</label>
    </ligand>
</feature>
<feature type="binding site" evidence="5 26">
    <location>
        <position position="1595"/>
    </location>
    <ligand>
        <name>Ca(2+)</name>
        <dbReference type="ChEBI" id="CHEBI:29108"/>
        <label>5</label>
    </ligand>
</feature>
<feature type="site" description="Cleavage; site 1" evidence="8">
    <location>
        <begin position="228"/>
        <end position="229"/>
    </location>
</feature>
<feature type="site" description="Cleavage; site 2" evidence="8">
    <location>
        <begin position="737"/>
        <end position="738"/>
    </location>
</feature>
<feature type="site" description="Cleavage; site 3" evidence="8">
    <location>
        <begin position="1156"/>
        <end position="1157"/>
    </location>
</feature>
<feature type="site" description="Cleavage; site 4" evidence="8">
    <location>
        <begin position="1291"/>
        <end position="1292"/>
    </location>
</feature>
<feature type="sequence conflict" description="In Ref. 3; AAB60809." evidence="18" ref="3">
    <original>V</original>
    <variation>I</variation>
    <location>
        <position position="796"/>
    </location>
</feature>
<feature type="sequence conflict" description="In Ref. 2; AAC26523." evidence="18" ref="2">
    <original>K</original>
    <variation>N</variation>
    <location>
        <position position="1351"/>
    </location>
</feature>
<feature type="sequence conflict" description="In Ref. 2; AAC26523." evidence="18" ref="2">
    <original>D</original>
    <variation>Y</variation>
    <location>
        <position position="1364"/>
    </location>
</feature>
<feature type="sequence conflict" description="In Ref. 3; AAB60809." evidence="18" ref="3">
    <original>D</original>
    <variation>N</variation>
    <location>
        <position position="1390"/>
    </location>
</feature>
<feature type="sequence conflict" description="In Ref. 2; AAC26523." evidence="18" ref="2">
    <original>D</original>
    <variation>H</variation>
    <location>
        <position position="1448"/>
    </location>
</feature>
<feature type="sequence conflict" description="In Ref. 3; AAB60809." evidence="18" ref="3">
    <original>H</original>
    <variation>Y</variation>
    <location>
        <position position="1479"/>
    </location>
</feature>
<feature type="strand" evidence="32">
    <location>
        <begin position="22"/>
        <end position="25"/>
    </location>
</feature>
<feature type="strand" evidence="32">
    <location>
        <begin position="27"/>
        <end position="30"/>
    </location>
</feature>
<feature type="strand" evidence="32">
    <location>
        <begin position="32"/>
        <end position="39"/>
    </location>
</feature>
<feature type="strand" evidence="32">
    <location>
        <begin position="42"/>
        <end position="48"/>
    </location>
</feature>
<feature type="strand" evidence="32">
    <location>
        <begin position="50"/>
        <end position="59"/>
    </location>
</feature>
<feature type="strand" evidence="32">
    <location>
        <begin position="62"/>
        <end position="68"/>
    </location>
</feature>
<feature type="strand" evidence="32">
    <location>
        <begin position="73"/>
        <end position="75"/>
    </location>
</feature>
<feature type="strand" evidence="32">
    <location>
        <begin position="83"/>
        <end position="92"/>
    </location>
</feature>
<feature type="strand" evidence="32">
    <location>
        <begin position="97"/>
        <end position="111"/>
    </location>
</feature>
<feature type="turn" evidence="32">
    <location>
        <begin position="113"/>
        <end position="115"/>
    </location>
</feature>
<feature type="helix" evidence="32">
    <location>
        <begin position="133"/>
        <end position="135"/>
    </location>
</feature>
<feature type="helix" evidence="32">
    <location>
        <begin position="144"/>
        <end position="146"/>
    </location>
</feature>
<feature type="strand" evidence="32">
    <location>
        <begin position="155"/>
        <end position="164"/>
    </location>
</feature>
<feature type="strand" evidence="32">
    <location>
        <begin position="167"/>
        <end position="174"/>
    </location>
</feature>
<feature type="strand" evidence="32">
    <location>
        <begin position="177"/>
        <end position="180"/>
    </location>
</feature>
<feature type="turn" evidence="32">
    <location>
        <begin position="181"/>
        <end position="184"/>
    </location>
</feature>
<feature type="strand" evidence="32">
    <location>
        <begin position="185"/>
        <end position="199"/>
    </location>
</feature>
<feature type="helix" evidence="33">
    <location>
        <begin position="230"/>
        <end position="233"/>
    </location>
</feature>
<feature type="strand" evidence="33">
    <location>
        <begin position="240"/>
        <end position="248"/>
    </location>
</feature>
<feature type="helix" evidence="33">
    <location>
        <begin position="250"/>
        <end position="252"/>
    </location>
</feature>
<feature type="helix" evidence="33">
    <location>
        <begin position="253"/>
        <end position="265"/>
    </location>
</feature>
<feature type="strand" evidence="33">
    <location>
        <begin position="268"/>
        <end position="274"/>
    </location>
</feature>
<feature type="turn" evidence="33">
    <location>
        <begin position="278"/>
        <end position="280"/>
    </location>
</feature>
<feature type="helix" evidence="33">
    <location>
        <begin position="284"/>
        <end position="300"/>
    </location>
</feature>
<feature type="strand" evidence="33">
    <location>
        <begin position="306"/>
        <end position="312"/>
    </location>
</feature>
<feature type="turn" evidence="33">
    <location>
        <begin position="314"/>
        <end position="316"/>
    </location>
</feature>
<feature type="turn" evidence="33">
    <location>
        <begin position="323"/>
        <end position="325"/>
    </location>
</feature>
<feature type="strand" evidence="33">
    <location>
        <begin position="327"/>
        <end position="330"/>
    </location>
</feature>
<feature type="helix" evidence="33">
    <location>
        <begin position="331"/>
        <end position="334"/>
    </location>
</feature>
<feature type="strand" evidence="33">
    <location>
        <begin position="337"/>
        <end position="341"/>
    </location>
</feature>
<feature type="strand" evidence="33">
    <location>
        <begin position="343"/>
        <end position="349"/>
    </location>
</feature>
<feature type="helix" evidence="33">
    <location>
        <begin position="354"/>
        <end position="369"/>
    </location>
</feature>
<feature type="helix" evidence="33">
    <location>
        <begin position="375"/>
        <end position="379"/>
    </location>
</feature>
<feature type="strand" evidence="33">
    <location>
        <begin position="380"/>
        <end position="385"/>
    </location>
</feature>
<feature type="helix" evidence="33">
    <location>
        <begin position="391"/>
        <end position="394"/>
    </location>
</feature>
<feature type="helix" evidence="33">
    <location>
        <begin position="396"/>
        <end position="406"/>
    </location>
</feature>
<feature type="helix" evidence="33">
    <location>
        <begin position="410"/>
        <end position="412"/>
    </location>
</feature>
<feature type="strand" evidence="33">
    <location>
        <begin position="415"/>
        <end position="420"/>
    </location>
</feature>
<feature type="turn" evidence="33">
    <location>
        <begin position="426"/>
        <end position="429"/>
    </location>
</feature>
<feature type="helix" evidence="33">
    <location>
        <begin position="430"/>
        <end position="434"/>
    </location>
</feature>
<feature type="strand" evidence="33">
    <location>
        <begin position="437"/>
        <end position="443"/>
    </location>
</feature>
<feature type="turn" evidence="33">
    <location>
        <begin position="451"/>
        <end position="454"/>
    </location>
</feature>
<feature type="helix" evidence="33">
    <location>
        <begin position="457"/>
        <end position="460"/>
    </location>
</feature>
<feature type="strand" evidence="33">
    <location>
        <begin position="470"/>
        <end position="478"/>
    </location>
</feature>
<feature type="strand" evidence="33">
    <location>
        <begin position="484"/>
        <end position="486"/>
    </location>
</feature>
<feature type="helix" evidence="33">
    <location>
        <begin position="489"/>
        <end position="495"/>
    </location>
</feature>
<feature type="strand" evidence="33">
    <location>
        <begin position="499"/>
        <end position="509"/>
    </location>
</feature>
<feature type="helix" evidence="33">
    <location>
        <begin position="513"/>
        <end position="521"/>
    </location>
</feature>
<feature type="turn" evidence="31">
    <location>
        <begin position="533"/>
        <end position="535"/>
    </location>
</feature>
<feature type="helix" evidence="33">
    <location>
        <begin position="540"/>
        <end position="545"/>
    </location>
</feature>
<feature type="strand" evidence="33">
    <location>
        <begin position="547"/>
        <end position="549"/>
    </location>
</feature>
<feature type="helix" evidence="33">
    <location>
        <begin position="553"/>
        <end position="570"/>
    </location>
</feature>
<feature type="helix" evidence="33">
    <location>
        <begin position="578"/>
        <end position="584"/>
    </location>
</feature>
<feature type="strand" evidence="33">
    <location>
        <begin position="585"/>
        <end position="589"/>
    </location>
</feature>
<feature type="strand" evidence="33">
    <location>
        <begin position="616"/>
        <end position="623"/>
    </location>
</feature>
<feature type="strand" evidence="33">
    <location>
        <begin position="627"/>
        <end position="632"/>
    </location>
</feature>
<feature type="strand" evidence="33">
    <location>
        <begin position="635"/>
        <end position="642"/>
    </location>
</feature>
<feature type="strand" evidence="33">
    <location>
        <begin position="646"/>
        <end position="654"/>
    </location>
</feature>
<feature type="strand" evidence="33">
    <location>
        <begin position="660"/>
        <end position="667"/>
    </location>
</feature>
<feature type="strand" evidence="33">
    <location>
        <begin position="674"/>
        <end position="680"/>
    </location>
</feature>
<feature type="strand" evidence="30">
    <location>
        <begin position="984"/>
        <end position="987"/>
    </location>
</feature>
<feature type="strand" evidence="30">
    <location>
        <begin position="997"/>
        <end position="1001"/>
    </location>
</feature>
<feature type="strand" evidence="30">
    <location>
        <begin position="1010"/>
        <end position="1013"/>
    </location>
</feature>
<feature type="turn" evidence="30">
    <location>
        <begin position="1014"/>
        <end position="1016"/>
    </location>
</feature>
<feature type="strand" evidence="30">
    <location>
        <begin position="1022"/>
        <end position="1032"/>
    </location>
</feature>
<feature type="turn" evidence="30">
    <location>
        <begin position="1033"/>
        <end position="1036"/>
    </location>
</feature>
<feature type="strand" evidence="30">
    <location>
        <begin position="1043"/>
        <end position="1046"/>
    </location>
</feature>
<feature type="strand" evidence="30">
    <location>
        <begin position="1056"/>
        <end position="1066"/>
    </location>
</feature>
<feature type="strand" evidence="30">
    <location>
        <begin position="1073"/>
        <end position="1081"/>
    </location>
</feature>
<feature type="helix" evidence="30">
    <location>
        <begin position="1085"/>
        <end position="1087"/>
    </location>
</feature>
<feature type="strand" evidence="30">
    <location>
        <begin position="1090"/>
        <end position="1096"/>
    </location>
</feature>
<feature type="strand" evidence="30">
    <location>
        <begin position="1117"/>
        <end position="1123"/>
    </location>
</feature>
<feature type="strand" evidence="30">
    <location>
        <begin position="1129"/>
        <end position="1134"/>
    </location>
</feature>
<feature type="strand" evidence="30">
    <location>
        <begin position="1142"/>
        <end position="1152"/>
    </location>
</feature>
<feature type="strand" evidence="29">
    <location>
        <begin position="1428"/>
        <end position="1432"/>
    </location>
</feature>
<feature type="strand" evidence="29">
    <location>
        <begin position="1442"/>
        <end position="1448"/>
    </location>
</feature>
<feature type="strand" evidence="29">
    <location>
        <begin position="1454"/>
        <end position="1457"/>
    </location>
</feature>
<feature type="turn" evidence="29">
    <location>
        <begin position="1459"/>
        <end position="1462"/>
    </location>
</feature>
<feature type="strand" evidence="29">
    <location>
        <begin position="1474"/>
        <end position="1480"/>
    </location>
</feature>
<feature type="turn" evidence="29">
    <location>
        <begin position="1481"/>
        <end position="1483"/>
    </location>
</feature>
<feature type="strand" evidence="29">
    <location>
        <begin position="1489"/>
        <end position="1493"/>
    </location>
</feature>
<feature type="strand" evidence="29">
    <location>
        <begin position="1503"/>
        <end position="1513"/>
    </location>
</feature>
<feature type="strand" evidence="29">
    <location>
        <begin position="1520"/>
        <end position="1528"/>
    </location>
</feature>
<feature type="helix" evidence="29">
    <location>
        <begin position="1532"/>
        <end position="1534"/>
    </location>
</feature>
<feature type="strand" evidence="29">
    <location>
        <begin position="1539"/>
        <end position="1543"/>
    </location>
</feature>
<feature type="strand" evidence="29">
    <location>
        <begin position="1566"/>
        <end position="1572"/>
    </location>
</feature>
<feature type="strand" evidence="29">
    <location>
        <begin position="1578"/>
        <end position="1585"/>
    </location>
</feature>
<feature type="strand" evidence="29">
    <location>
        <begin position="1591"/>
        <end position="1601"/>
    </location>
</feature>
<proteinExistence type="evidence at protein level"/>
<accession>Q51817</accession>
<accession>O07442</accession>
<accession>O52050</accession>
<keyword id="KW-0002">3D-structure</keyword>
<keyword id="KW-0106">Calcium</keyword>
<keyword id="KW-0903">Direct protein sequencing</keyword>
<keyword id="KW-0378">Hydrolase</keyword>
<keyword id="KW-0479">Metal-binding</keyword>
<keyword id="KW-0645">Protease</keyword>
<keyword id="KW-0964">Secreted</keyword>
<keyword id="KW-0732">Signal</keyword>
<keyword id="KW-0788">Thiol protease</keyword>
<keyword id="KW-0843">Virulence</keyword>
<keyword id="KW-0865">Zymogen</keyword>
<organism>
    <name type="scientific">Porphyromonas gingivalis</name>
    <name type="common">Bacteroides gingivalis</name>
    <dbReference type="NCBI Taxonomy" id="837"/>
    <lineage>
        <taxon>Bacteria</taxon>
        <taxon>Pseudomonadati</taxon>
        <taxon>Bacteroidota</taxon>
        <taxon>Bacteroidia</taxon>
        <taxon>Bacteroidales</taxon>
        <taxon>Porphyromonadaceae</taxon>
        <taxon>Porphyromonas</taxon>
    </lineage>
</organism>
<protein>
    <recommendedName>
        <fullName evidence="1 10">Lys-gingipain W83</fullName>
        <ecNumber evidence="8">3.4.22.47</ecNumber>
    </recommendedName>
    <alternativeName>
        <fullName evidence="17 25">Lysine specific cysteine protease</fullName>
    </alternativeName>
    <alternativeName>
        <fullName evidence="9 24">Lysine-specific cysteine proteinase</fullName>
    </alternativeName>
    <alternativeName>
        <fullName evidence="15 23">Porphypain</fullName>
    </alternativeName>
    <alternativeName>
        <fullName evidence="9">PrtK48</fullName>
    </alternativeName>
    <component>
        <recommendedName>
            <fullName evidence="1 16">Lys-gingipain catalytic subunit</fullName>
        </recommendedName>
    </component>
    <component>
        <recommendedName>
            <fullName evidence="16">39 kDa adhesin</fullName>
        </recommendedName>
        <alternativeName>
            <fullName evidence="9">PrtK39</fullName>
        </alternativeName>
    </component>
    <component>
        <recommendedName>
            <fullName evidence="16">15 kDa adhesin</fullName>
        </recommendedName>
        <alternativeName>
            <fullName evidence="9">PrtK15</fullName>
        </alternativeName>
    </component>
    <component>
        <recommendedName>
            <fullName evidence="16">44 kDa adhesin</fullName>
        </recommendedName>
        <alternativeName>
            <fullName evidence="9">PrtK44</fullName>
        </alternativeName>
    </component>
</protein>
<gene>
    <name evidence="1" type="primary">kgp</name>
    <name evidence="24" type="synonym">prtK</name>
    <name evidence="17 23" type="synonym">prtP</name>
</gene>